<reference key="1">
    <citation type="journal article" date="2006" name="Genome Res.">
        <title>Massive genome erosion and functional adaptations provide insights into the symbiotic lifestyle of Sodalis glossinidius in the tsetse host.</title>
        <authorList>
            <person name="Toh H."/>
            <person name="Weiss B.L."/>
            <person name="Perkin S.A.H."/>
            <person name="Yamashita A."/>
            <person name="Oshima K."/>
            <person name="Hattori M."/>
            <person name="Aksoy S."/>
        </authorList>
    </citation>
    <scope>NUCLEOTIDE SEQUENCE [LARGE SCALE GENOMIC DNA]</scope>
    <source>
        <strain>morsitans</strain>
    </source>
</reference>
<accession>Q2NQM6</accession>
<feature type="chain" id="PRO_0000265436" description="Small ribosomal subunit protein uS19">
    <location>
        <begin position="1"/>
        <end position="92"/>
    </location>
</feature>
<name>RS19_SODGM</name>
<organism>
    <name type="scientific">Sodalis glossinidius (strain morsitans)</name>
    <dbReference type="NCBI Taxonomy" id="343509"/>
    <lineage>
        <taxon>Bacteria</taxon>
        <taxon>Pseudomonadati</taxon>
        <taxon>Pseudomonadota</taxon>
        <taxon>Gammaproteobacteria</taxon>
        <taxon>Enterobacterales</taxon>
        <taxon>Bruguierivoracaceae</taxon>
        <taxon>Sodalis</taxon>
    </lineage>
</organism>
<protein>
    <recommendedName>
        <fullName evidence="1">Small ribosomal subunit protein uS19</fullName>
    </recommendedName>
    <alternativeName>
        <fullName evidence="2">30S ribosomal protein S19</fullName>
    </alternativeName>
</protein>
<comment type="function">
    <text evidence="1">Protein S19 forms a complex with S13 that binds strongly to the 16S ribosomal RNA.</text>
</comment>
<comment type="similarity">
    <text evidence="1">Belongs to the universal ribosomal protein uS19 family.</text>
</comment>
<proteinExistence type="inferred from homology"/>
<gene>
    <name evidence="1" type="primary">rpsS</name>
    <name type="ordered locus">SG2274</name>
</gene>
<keyword id="KW-0687">Ribonucleoprotein</keyword>
<keyword id="KW-0689">Ribosomal protein</keyword>
<keyword id="KW-0694">RNA-binding</keyword>
<keyword id="KW-0699">rRNA-binding</keyword>
<sequence>MPRSLKKGPFIDLHLLKKVEKAVESGDKKPIRTWSRRSTIFPTMIGLTIAVHNGRQHVPVFVADEMVGHKLGEFAPTRTYRGHAADKKAKKR</sequence>
<evidence type="ECO:0000255" key="1">
    <source>
        <dbReference type="HAMAP-Rule" id="MF_00531"/>
    </source>
</evidence>
<evidence type="ECO:0000305" key="2"/>
<dbReference type="EMBL" id="AP008232">
    <property type="protein sequence ID" value="BAE75549.1"/>
    <property type="molecule type" value="Genomic_DNA"/>
</dbReference>
<dbReference type="RefSeq" id="WP_011412084.1">
    <property type="nucleotide sequence ID" value="NZ_LN854557.1"/>
</dbReference>
<dbReference type="SMR" id="Q2NQM6"/>
<dbReference type="STRING" id="343509.SG2274"/>
<dbReference type="KEGG" id="sgl:SG2274"/>
<dbReference type="eggNOG" id="COG0185">
    <property type="taxonomic scope" value="Bacteria"/>
</dbReference>
<dbReference type="HOGENOM" id="CLU_144911_0_1_6"/>
<dbReference type="OrthoDB" id="9797833at2"/>
<dbReference type="BioCyc" id="SGLO343509:SGP1_RS20820-MONOMER"/>
<dbReference type="Proteomes" id="UP000001932">
    <property type="component" value="Chromosome"/>
</dbReference>
<dbReference type="GO" id="GO:0005737">
    <property type="term" value="C:cytoplasm"/>
    <property type="evidence" value="ECO:0007669"/>
    <property type="project" value="UniProtKB-ARBA"/>
</dbReference>
<dbReference type="GO" id="GO:0015935">
    <property type="term" value="C:small ribosomal subunit"/>
    <property type="evidence" value="ECO:0007669"/>
    <property type="project" value="InterPro"/>
</dbReference>
<dbReference type="GO" id="GO:0019843">
    <property type="term" value="F:rRNA binding"/>
    <property type="evidence" value="ECO:0007669"/>
    <property type="project" value="UniProtKB-UniRule"/>
</dbReference>
<dbReference type="GO" id="GO:0003735">
    <property type="term" value="F:structural constituent of ribosome"/>
    <property type="evidence" value="ECO:0007669"/>
    <property type="project" value="InterPro"/>
</dbReference>
<dbReference type="GO" id="GO:0000028">
    <property type="term" value="P:ribosomal small subunit assembly"/>
    <property type="evidence" value="ECO:0007669"/>
    <property type="project" value="TreeGrafter"/>
</dbReference>
<dbReference type="GO" id="GO:0006412">
    <property type="term" value="P:translation"/>
    <property type="evidence" value="ECO:0007669"/>
    <property type="project" value="UniProtKB-UniRule"/>
</dbReference>
<dbReference type="FunFam" id="3.30.860.10:FF:000001">
    <property type="entry name" value="30S ribosomal protein S19"/>
    <property type="match status" value="1"/>
</dbReference>
<dbReference type="Gene3D" id="3.30.860.10">
    <property type="entry name" value="30s Ribosomal Protein S19, Chain A"/>
    <property type="match status" value="1"/>
</dbReference>
<dbReference type="HAMAP" id="MF_00531">
    <property type="entry name" value="Ribosomal_uS19"/>
    <property type="match status" value="1"/>
</dbReference>
<dbReference type="InterPro" id="IPR002222">
    <property type="entry name" value="Ribosomal_uS19"/>
</dbReference>
<dbReference type="InterPro" id="IPR005732">
    <property type="entry name" value="Ribosomal_uS19_bac-type"/>
</dbReference>
<dbReference type="InterPro" id="IPR020934">
    <property type="entry name" value="Ribosomal_uS19_CS"/>
</dbReference>
<dbReference type="InterPro" id="IPR023575">
    <property type="entry name" value="Ribosomal_uS19_SF"/>
</dbReference>
<dbReference type="NCBIfam" id="TIGR01050">
    <property type="entry name" value="rpsS_bact"/>
    <property type="match status" value="1"/>
</dbReference>
<dbReference type="PANTHER" id="PTHR11880">
    <property type="entry name" value="RIBOSOMAL PROTEIN S19P FAMILY MEMBER"/>
    <property type="match status" value="1"/>
</dbReference>
<dbReference type="PANTHER" id="PTHR11880:SF8">
    <property type="entry name" value="SMALL RIBOSOMAL SUBUNIT PROTEIN US19M"/>
    <property type="match status" value="1"/>
</dbReference>
<dbReference type="Pfam" id="PF00203">
    <property type="entry name" value="Ribosomal_S19"/>
    <property type="match status" value="1"/>
</dbReference>
<dbReference type="PIRSF" id="PIRSF002144">
    <property type="entry name" value="Ribosomal_S19"/>
    <property type="match status" value="1"/>
</dbReference>
<dbReference type="PRINTS" id="PR00975">
    <property type="entry name" value="RIBOSOMALS19"/>
</dbReference>
<dbReference type="SUPFAM" id="SSF54570">
    <property type="entry name" value="Ribosomal protein S19"/>
    <property type="match status" value="1"/>
</dbReference>
<dbReference type="PROSITE" id="PS00323">
    <property type="entry name" value="RIBOSOMAL_S19"/>
    <property type="match status" value="1"/>
</dbReference>